<keyword id="KW-1015">Disulfide bond</keyword>
<keyword id="KW-0256">Endoplasmic reticulum</keyword>
<keyword id="KW-0656">Proto-oncogene</keyword>
<keyword id="KW-1185">Reference proteome</keyword>
<keyword id="KW-0964">Secreted</keyword>
<keyword id="KW-0732">Signal</keyword>
<gene>
    <name type="primary">Agr2</name>
    <name type="synonym">Gob4</name>
</gene>
<proteinExistence type="evidence at protein level"/>
<reference key="1">
    <citation type="journal article" date="1998" name="Biochem. Biophys. Res. Commun.">
        <title>hAG-2, the human homologue of the Xenopus laevis cement gland gene XAG-2, is coexpressed with estrogen receptor in breast cancer cell lines.</title>
        <authorList>
            <person name="Thompson D.A."/>
            <person name="Weigel R.J."/>
        </authorList>
    </citation>
    <scope>NUCLEOTIDE SEQUENCE [MRNA]</scope>
    <scope>TISSUE SPECIFICITY</scope>
    <source>
        <strain>Swiss Webster</strain>
        <tissue>Embryo</tissue>
    </source>
</reference>
<reference key="2">
    <citation type="journal article" date="1999" name="Biochim. Biophys. Acta">
        <title>Cloning of a gene, gob-4, which is expressed in intestinal goblet cells in mice.</title>
        <authorList>
            <person name="Komiya T."/>
            <person name="Hirohashi S."/>
        </authorList>
    </citation>
    <scope>NUCLEOTIDE SEQUENCE [MRNA]</scope>
    <scope>TISSUE SPECIFICITY</scope>
    <source>
        <strain>BALB/cJ</strain>
        <tissue>Intestine</tissue>
    </source>
</reference>
<reference key="3">
    <citation type="journal article" date="2005" name="Science">
        <title>The transcriptional landscape of the mammalian genome.</title>
        <authorList>
            <person name="Carninci P."/>
            <person name="Kasukawa T."/>
            <person name="Katayama S."/>
            <person name="Gough J."/>
            <person name="Frith M.C."/>
            <person name="Maeda N."/>
            <person name="Oyama R."/>
            <person name="Ravasi T."/>
            <person name="Lenhard B."/>
            <person name="Wells C."/>
            <person name="Kodzius R."/>
            <person name="Shimokawa K."/>
            <person name="Bajic V.B."/>
            <person name="Brenner S.E."/>
            <person name="Batalov S."/>
            <person name="Forrest A.R."/>
            <person name="Zavolan M."/>
            <person name="Davis M.J."/>
            <person name="Wilming L.G."/>
            <person name="Aidinis V."/>
            <person name="Allen J.E."/>
            <person name="Ambesi-Impiombato A."/>
            <person name="Apweiler R."/>
            <person name="Aturaliya R.N."/>
            <person name="Bailey T.L."/>
            <person name="Bansal M."/>
            <person name="Baxter L."/>
            <person name="Beisel K.W."/>
            <person name="Bersano T."/>
            <person name="Bono H."/>
            <person name="Chalk A.M."/>
            <person name="Chiu K.P."/>
            <person name="Choudhary V."/>
            <person name="Christoffels A."/>
            <person name="Clutterbuck D.R."/>
            <person name="Crowe M.L."/>
            <person name="Dalla E."/>
            <person name="Dalrymple B.P."/>
            <person name="de Bono B."/>
            <person name="Della Gatta G."/>
            <person name="di Bernardo D."/>
            <person name="Down T."/>
            <person name="Engstrom P."/>
            <person name="Fagiolini M."/>
            <person name="Faulkner G."/>
            <person name="Fletcher C.F."/>
            <person name="Fukushima T."/>
            <person name="Furuno M."/>
            <person name="Futaki S."/>
            <person name="Gariboldi M."/>
            <person name="Georgii-Hemming P."/>
            <person name="Gingeras T.R."/>
            <person name="Gojobori T."/>
            <person name="Green R.E."/>
            <person name="Gustincich S."/>
            <person name="Harbers M."/>
            <person name="Hayashi Y."/>
            <person name="Hensch T.K."/>
            <person name="Hirokawa N."/>
            <person name="Hill D."/>
            <person name="Huminiecki L."/>
            <person name="Iacono M."/>
            <person name="Ikeo K."/>
            <person name="Iwama A."/>
            <person name="Ishikawa T."/>
            <person name="Jakt M."/>
            <person name="Kanapin A."/>
            <person name="Katoh M."/>
            <person name="Kawasawa Y."/>
            <person name="Kelso J."/>
            <person name="Kitamura H."/>
            <person name="Kitano H."/>
            <person name="Kollias G."/>
            <person name="Krishnan S.P."/>
            <person name="Kruger A."/>
            <person name="Kummerfeld S.K."/>
            <person name="Kurochkin I.V."/>
            <person name="Lareau L.F."/>
            <person name="Lazarevic D."/>
            <person name="Lipovich L."/>
            <person name="Liu J."/>
            <person name="Liuni S."/>
            <person name="McWilliam S."/>
            <person name="Madan Babu M."/>
            <person name="Madera M."/>
            <person name="Marchionni L."/>
            <person name="Matsuda H."/>
            <person name="Matsuzawa S."/>
            <person name="Miki H."/>
            <person name="Mignone F."/>
            <person name="Miyake S."/>
            <person name="Morris K."/>
            <person name="Mottagui-Tabar S."/>
            <person name="Mulder N."/>
            <person name="Nakano N."/>
            <person name="Nakauchi H."/>
            <person name="Ng P."/>
            <person name="Nilsson R."/>
            <person name="Nishiguchi S."/>
            <person name="Nishikawa S."/>
            <person name="Nori F."/>
            <person name="Ohara O."/>
            <person name="Okazaki Y."/>
            <person name="Orlando V."/>
            <person name="Pang K.C."/>
            <person name="Pavan W.J."/>
            <person name="Pavesi G."/>
            <person name="Pesole G."/>
            <person name="Petrovsky N."/>
            <person name="Piazza S."/>
            <person name="Reed J."/>
            <person name="Reid J.F."/>
            <person name="Ring B.Z."/>
            <person name="Ringwald M."/>
            <person name="Rost B."/>
            <person name="Ruan Y."/>
            <person name="Salzberg S.L."/>
            <person name="Sandelin A."/>
            <person name="Schneider C."/>
            <person name="Schoenbach C."/>
            <person name="Sekiguchi K."/>
            <person name="Semple C.A."/>
            <person name="Seno S."/>
            <person name="Sessa L."/>
            <person name="Sheng Y."/>
            <person name="Shibata Y."/>
            <person name="Shimada H."/>
            <person name="Shimada K."/>
            <person name="Silva D."/>
            <person name="Sinclair B."/>
            <person name="Sperling S."/>
            <person name="Stupka E."/>
            <person name="Sugiura K."/>
            <person name="Sultana R."/>
            <person name="Takenaka Y."/>
            <person name="Taki K."/>
            <person name="Tammoja K."/>
            <person name="Tan S.L."/>
            <person name="Tang S."/>
            <person name="Taylor M.S."/>
            <person name="Tegner J."/>
            <person name="Teichmann S.A."/>
            <person name="Ueda H.R."/>
            <person name="van Nimwegen E."/>
            <person name="Verardo R."/>
            <person name="Wei C.L."/>
            <person name="Yagi K."/>
            <person name="Yamanishi H."/>
            <person name="Zabarovsky E."/>
            <person name="Zhu S."/>
            <person name="Zimmer A."/>
            <person name="Hide W."/>
            <person name="Bult C."/>
            <person name="Grimmond S.M."/>
            <person name="Teasdale R.D."/>
            <person name="Liu E.T."/>
            <person name="Brusic V."/>
            <person name="Quackenbush J."/>
            <person name="Wahlestedt C."/>
            <person name="Mattick J.S."/>
            <person name="Hume D.A."/>
            <person name="Kai C."/>
            <person name="Sasaki D."/>
            <person name="Tomaru Y."/>
            <person name="Fukuda S."/>
            <person name="Kanamori-Katayama M."/>
            <person name="Suzuki M."/>
            <person name="Aoki J."/>
            <person name="Arakawa T."/>
            <person name="Iida J."/>
            <person name="Imamura K."/>
            <person name="Itoh M."/>
            <person name="Kato T."/>
            <person name="Kawaji H."/>
            <person name="Kawagashira N."/>
            <person name="Kawashima T."/>
            <person name="Kojima M."/>
            <person name="Kondo S."/>
            <person name="Konno H."/>
            <person name="Nakano K."/>
            <person name="Ninomiya N."/>
            <person name="Nishio T."/>
            <person name="Okada M."/>
            <person name="Plessy C."/>
            <person name="Shibata K."/>
            <person name="Shiraki T."/>
            <person name="Suzuki S."/>
            <person name="Tagami M."/>
            <person name="Waki K."/>
            <person name="Watahiki A."/>
            <person name="Okamura-Oho Y."/>
            <person name="Suzuki H."/>
            <person name="Kawai J."/>
            <person name="Hayashizaki Y."/>
        </authorList>
    </citation>
    <scope>NUCLEOTIDE SEQUENCE [LARGE SCALE MRNA]</scope>
    <source>
        <strain>C57BL/6J</strain>
        <tissue>Pancreas</tissue>
    </source>
</reference>
<reference key="4">
    <citation type="journal article" date="2009" name="PLoS Biol.">
        <title>Lineage-specific biology revealed by a finished genome assembly of the mouse.</title>
        <authorList>
            <person name="Church D.M."/>
            <person name="Goodstadt L."/>
            <person name="Hillier L.W."/>
            <person name="Zody M.C."/>
            <person name="Goldstein S."/>
            <person name="She X."/>
            <person name="Bult C.J."/>
            <person name="Agarwala R."/>
            <person name="Cherry J.L."/>
            <person name="DiCuccio M."/>
            <person name="Hlavina W."/>
            <person name="Kapustin Y."/>
            <person name="Meric P."/>
            <person name="Maglott D."/>
            <person name="Birtle Z."/>
            <person name="Marques A.C."/>
            <person name="Graves T."/>
            <person name="Zhou S."/>
            <person name="Teague B."/>
            <person name="Potamousis K."/>
            <person name="Churas C."/>
            <person name="Place M."/>
            <person name="Herschleb J."/>
            <person name="Runnheim R."/>
            <person name="Forrest D."/>
            <person name="Amos-Landgraf J."/>
            <person name="Schwartz D.C."/>
            <person name="Cheng Z."/>
            <person name="Lindblad-Toh K."/>
            <person name="Eichler E.E."/>
            <person name="Ponting C.P."/>
        </authorList>
    </citation>
    <scope>NUCLEOTIDE SEQUENCE [LARGE SCALE GENOMIC DNA]</scope>
    <source>
        <strain>C57BL/6J</strain>
    </source>
</reference>
<reference key="5">
    <citation type="journal article" date="2004" name="Genome Res.">
        <title>The status, quality, and expansion of the NIH full-length cDNA project: the Mammalian Gene Collection (MGC).</title>
        <authorList>
            <consortium name="The MGC Project Team"/>
        </authorList>
    </citation>
    <scope>NUCLEOTIDE SEQUENCE [LARGE SCALE MRNA]</scope>
    <source>
        <strain>FVB/N</strain>
        <tissue>Colon</tissue>
    </source>
</reference>
<reference key="6">
    <citation type="journal article" date="2009" name="Proc. Natl. Acad. Sci. U.S.A.">
        <title>The protein disulfide isomerase AGR2 is essential for production of intestinal mucus.</title>
        <authorList>
            <person name="Park S.-W."/>
            <person name="Zhen G."/>
            <person name="Verhaeghe C."/>
            <person name="Nakagami Y."/>
            <person name="Nguyenvu L.T."/>
            <person name="Barczak A.J."/>
            <person name="Killeen N."/>
            <person name="Erle D.J."/>
        </authorList>
    </citation>
    <scope>FUNCTION</scope>
    <scope>DISRUPTION PHENOTYPE</scope>
    <scope>SUBCELLULAR LOCATION</scope>
</reference>
<reference key="7">
    <citation type="journal article" date="2010" name="Cell">
        <title>A tissue-specific atlas of mouse protein phosphorylation and expression.</title>
        <authorList>
            <person name="Huttlin E.L."/>
            <person name="Jedrychowski M.P."/>
            <person name="Elias J.E."/>
            <person name="Goswami T."/>
            <person name="Rad R."/>
            <person name="Beausoleil S.A."/>
            <person name="Villen J."/>
            <person name="Haas W."/>
            <person name="Sowa M.E."/>
            <person name="Gygi S.P."/>
        </authorList>
    </citation>
    <scope>IDENTIFICATION BY MASS SPECTROMETRY [LARGE SCALE ANALYSIS]</scope>
    <source>
        <tissue>Lung</tissue>
        <tissue>Pancreas</tissue>
    </source>
</reference>
<name>AGR2_MOUSE</name>
<feature type="signal peptide" evidence="2">
    <location>
        <begin position="1"/>
        <end position="20"/>
    </location>
</feature>
<feature type="chain" id="PRO_0000001038" description="Anterior gradient protein 2 homolog">
    <location>
        <begin position="21"/>
        <end position="175"/>
    </location>
</feature>
<feature type="region of interest" description="Required to promote cell adhesion" evidence="2">
    <location>
        <begin position="21"/>
        <end position="40"/>
    </location>
</feature>
<feature type="region of interest" description="Disordered" evidence="3">
    <location>
        <begin position="24"/>
        <end position="44"/>
    </location>
</feature>
<feature type="short sequence motif" description="Homodimer stabilization; interchain" evidence="2">
    <location>
        <begin position="45"/>
        <end position="54"/>
    </location>
</feature>
<feature type="short sequence motif" description="Homodimer stabilization; interchain" evidence="2">
    <location>
        <begin position="60"/>
        <end position="67"/>
    </location>
</feature>
<feature type="compositionally biased region" description="Basic and acidic residues" evidence="3">
    <location>
        <begin position="29"/>
        <end position="38"/>
    </location>
</feature>
<protein>
    <recommendedName>
        <fullName>Anterior gradient protein 2 homolog</fullName>
        <shortName>AG-2</shortName>
        <shortName>mAG-2</shortName>
    </recommendedName>
    <alternativeName>
        <fullName>Protein Gob-4</fullName>
    </alternativeName>
    <alternativeName>
        <fullName>Secreted cement gland protein XAG-2 homolog</fullName>
    </alternativeName>
</protein>
<accession>O88312</accession>
<accession>A2CGA2</accession>
<evidence type="ECO:0000250" key="1"/>
<evidence type="ECO:0000250" key="2">
    <source>
        <dbReference type="UniProtKB" id="O95994"/>
    </source>
</evidence>
<evidence type="ECO:0000256" key="3">
    <source>
        <dbReference type="SAM" id="MobiDB-lite"/>
    </source>
</evidence>
<evidence type="ECO:0000269" key="4">
    <source>
    </source>
</evidence>
<evidence type="ECO:0000269" key="5">
    <source>
    </source>
</evidence>
<evidence type="ECO:0000269" key="6">
    <source>
    </source>
</evidence>
<evidence type="ECO:0000305" key="7"/>
<sequence>MEKFSVSAILLLVAISGTLAKDTTVKSGAKKDPKDSRPKLPQTLSRGWGDQLIWTQTYEEALYRSKTSNRPLMVIHHLDECPHSQALKKVFAEHKEIQKLAEQFVLLNLVYETTDKHLSPDGQYVPRIVFVDPSLTVRADITGRYSNRLYAYEPSDTALLYDNMKKALKLLKTEL</sequence>
<organism>
    <name type="scientific">Mus musculus</name>
    <name type="common">Mouse</name>
    <dbReference type="NCBI Taxonomy" id="10090"/>
    <lineage>
        <taxon>Eukaryota</taxon>
        <taxon>Metazoa</taxon>
        <taxon>Chordata</taxon>
        <taxon>Craniata</taxon>
        <taxon>Vertebrata</taxon>
        <taxon>Euteleostomi</taxon>
        <taxon>Mammalia</taxon>
        <taxon>Eutheria</taxon>
        <taxon>Euarchontoglires</taxon>
        <taxon>Glires</taxon>
        <taxon>Rodentia</taxon>
        <taxon>Myomorpha</taxon>
        <taxon>Muroidea</taxon>
        <taxon>Muridae</taxon>
        <taxon>Murinae</taxon>
        <taxon>Mus</taxon>
        <taxon>Mus</taxon>
    </lineage>
</organism>
<dbReference type="EMBL" id="AF044262">
    <property type="protein sequence ID" value="AAC72705.1"/>
    <property type="molecule type" value="mRNA"/>
</dbReference>
<dbReference type="EMBL" id="AB016592">
    <property type="protein sequence ID" value="BAA32044.1"/>
    <property type="molecule type" value="mRNA"/>
</dbReference>
<dbReference type="EMBL" id="AK007677">
    <property type="protein sequence ID" value="BAB25181.1"/>
    <property type="molecule type" value="mRNA"/>
</dbReference>
<dbReference type="EMBL" id="CT030196">
    <property type="status" value="NOT_ANNOTATED_CDS"/>
    <property type="molecule type" value="Genomic_DNA"/>
</dbReference>
<dbReference type="EMBL" id="BC013334">
    <property type="protein sequence ID" value="AAH13334.1"/>
    <property type="molecule type" value="mRNA"/>
</dbReference>
<dbReference type="CCDS" id="CCDS25881.1"/>
<dbReference type="RefSeq" id="NP_035913.1">
    <property type="nucleotide sequence ID" value="NM_011783.2"/>
</dbReference>
<dbReference type="SMR" id="O88312"/>
<dbReference type="FunCoup" id="O88312">
    <property type="interactions" value="346"/>
</dbReference>
<dbReference type="IntAct" id="O88312">
    <property type="interactions" value="1"/>
</dbReference>
<dbReference type="STRING" id="10090.ENSMUSP00000020898"/>
<dbReference type="iPTMnet" id="O88312"/>
<dbReference type="PhosphoSitePlus" id="O88312"/>
<dbReference type="PaxDb" id="10090-ENSMUSP00000020898"/>
<dbReference type="PeptideAtlas" id="O88312"/>
<dbReference type="ProteomicsDB" id="281955"/>
<dbReference type="Antibodypedia" id="1524">
    <property type="antibodies" value="929 antibodies from 41 providers"/>
</dbReference>
<dbReference type="DNASU" id="23795"/>
<dbReference type="Ensembl" id="ENSMUST00000020898.12">
    <property type="protein sequence ID" value="ENSMUSP00000020898.6"/>
    <property type="gene ID" value="ENSMUSG00000020581.12"/>
</dbReference>
<dbReference type="GeneID" id="23795"/>
<dbReference type="KEGG" id="mmu:23795"/>
<dbReference type="UCSC" id="uc007njm.1">
    <property type="organism name" value="mouse"/>
</dbReference>
<dbReference type="AGR" id="MGI:1344405"/>
<dbReference type="CTD" id="10551"/>
<dbReference type="MGI" id="MGI:1344405">
    <property type="gene designation" value="Agr2"/>
</dbReference>
<dbReference type="VEuPathDB" id="HostDB:ENSMUSG00000020581"/>
<dbReference type="eggNOG" id="ENOG502RYQ8">
    <property type="taxonomic scope" value="Eukaryota"/>
</dbReference>
<dbReference type="GeneTree" id="ENSGT00530000063273"/>
<dbReference type="HOGENOM" id="CLU_088048_1_1_1"/>
<dbReference type="InParanoid" id="O88312"/>
<dbReference type="OMA" id="YSNMQKA"/>
<dbReference type="OrthoDB" id="262308at2759"/>
<dbReference type="PhylomeDB" id="O88312"/>
<dbReference type="TreeFam" id="TF321449"/>
<dbReference type="BioGRID-ORCS" id="23795">
    <property type="hits" value="0 hits in 77 CRISPR screens"/>
</dbReference>
<dbReference type="ChiTaRS" id="Agr2">
    <property type="organism name" value="mouse"/>
</dbReference>
<dbReference type="PRO" id="PR:O88312"/>
<dbReference type="Proteomes" id="UP000000589">
    <property type="component" value="Chromosome 12"/>
</dbReference>
<dbReference type="RNAct" id="O88312">
    <property type="molecule type" value="protein"/>
</dbReference>
<dbReference type="Bgee" id="ENSMUSG00000020581">
    <property type="expression patterns" value="Expressed in prostate gland ventral lobe and 80 other cell types or tissues"/>
</dbReference>
<dbReference type="GO" id="GO:0005783">
    <property type="term" value="C:endoplasmic reticulum"/>
    <property type="evidence" value="ECO:0000314"/>
    <property type="project" value="UniProtKB"/>
</dbReference>
<dbReference type="GO" id="GO:0005576">
    <property type="term" value="C:extracellular region"/>
    <property type="evidence" value="ECO:0000250"/>
    <property type="project" value="UniProtKB"/>
</dbReference>
<dbReference type="GO" id="GO:0005615">
    <property type="term" value="C:extracellular space"/>
    <property type="evidence" value="ECO:0007669"/>
    <property type="project" value="Ensembl"/>
</dbReference>
<dbReference type="GO" id="GO:0005739">
    <property type="term" value="C:mitochondrion"/>
    <property type="evidence" value="ECO:0007005"/>
    <property type="project" value="MGI"/>
</dbReference>
<dbReference type="GO" id="GO:0002162">
    <property type="term" value="F:dystroglycan binding"/>
    <property type="evidence" value="ECO:0007669"/>
    <property type="project" value="Ensembl"/>
</dbReference>
<dbReference type="GO" id="GO:0005154">
    <property type="term" value="F:epidermal growth factor receptor binding"/>
    <property type="evidence" value="ECO:0007669"/>
    <property type="project" value="Ensembl"/>
</dbReference>
<dbReference type="GO" id="GO:0042802">
    <property type="term" value="F:identical protein binding"/>
    <property type="evidence" value="ECO:0000250"/>
    <property type="project" value="UniProtKB"/>
</dbReference>
<dbReference type="GO" id="GO:0042803">
    <property type="term" value="F:protein homodimerization activity"/>
    <property type="evidence" value="ECO:0000266"/>
    <property type="project" value="MGI"/>
</dbReference>
<dbReference type="GO" id="GO:0060326">
    <property type="term" value="P:cell chemotaxis"/>
    <property type="evidence" value="ECO:0000266"/>
    <property type="project" value="MGI"/>
</dbReference>
<dbReference type="GO" id="GO:0048546">
    <property type="term" value="P:digestive tract morphogenesis"/>
    <property type="evidence" value="ECO:0000315"/>
    <property type="project" value="UniProtKB"/>
</dbReference>
<dbReference type="GO" id="GO:0030968">
    <property type="term" value="P:endoplasmic reticulum unfolded protein response"/>
    <property type="evidence" value="ECO:0000266"/>
    <property type="project" value="MGI"/>
</dbReference>
<dbReference type="GO" id="GO:0006954">
    <property type="term" value="P:inflammatory response"/>
    <property type="evidence" value="ECO:0000315"/>
    <property type="project" value="MGI"/>
</dbReference>
<dbReference type="GO" id="GO:0060480">
    <property type="term" value="P:lung goblet cell differentiation"/>
    <property type="evidence" value="ECO:0000314"/>
    <property type="project" value="MGI"/>
</dbReference>
<dbReference type="GO" id="GO:0070254">
    <property type="term" value="P:mucus secretion"/>
    <property type="evidence" value="ECO:0000315"/>
    <property type="project" value="UniProtKB"/>
</dbReference>
<dbReference type="GO" id="GO:0010811">
    <property type="term" value="P:positive regulation of cell-substrate adhesion"/>
    <property type="evidence" value="ECO:0000250"/>
    <property type="project" value="UniProtKB"/>
</dbReference>
<dbReference type="GO" id="GO:0048639">
    <property type="term" value="P:positive regulation of developmental growth"/>
    <property type="evidence" value="ECO:0000315"/>
    <property type="project" value="UniProtKB"/>
</dbReference>
<dbReference type="GO" id="GO:0045742">
    <property type="term" value="P:positive regulation of epidermal growth factor receptor signaling pathway"/>
    <property type="evidence" value="ECO:0007669"/>
    <property type="project" value="Ensembl"/>
</dbReference>
<dbReference type="GO" id="GO:0010628">
    <property type="term" value="P:positive regulation of gene expression"/>
    <property type="evidence" value="ECO:0007669"/>
    <property type="project" value="Ensembl"/>
</dbReference>
<dbReference type="GO" id="GO:1903896">
    <property type="term" value="P:positive regulation of IRE1-mediated unfolded protein response"/>
    <property type="evidence" value="ECO:0007669"/>
    <property type="project" value="Ensembl"/>
</dbReference>
<dbReference type="GO" id="GO:1903899">
    <property type="term" value="P:positive regulation of PERK-mediated unfolded protein response"/>
    <property type="evidence" value="ECO:0007669"/>
    <property type="project" value="Ensembl"/>
</dbReference>
<dbReference type="GO" id="GO:1903078">
    <property type="term" value="P:positive regulation of protein localization to plasma membrane"/>
    <property type="evidence" value="ECO:0007669"/>
    <property type="project" value="Ensembl"/>
</dbReference>
<dbReference type="GO" id="GO:0034975">
    <property type="term" value="P:protein folding in endoplasmic reticulum"/>
    <property type="evidence" value="ECO:0000266"/>
    <property type="project" value="MGI"/>
</dbReference>
<dbReference type="CDD" id="cd02960">
    <property type="entry name" value="AGR"/>
    <property type="match status" value="1"/>
</dbReference>
<dbReference type="FunFam" id="3.40.30.10:FF:000036">
    <property type="entry name" value="anterior gradient protein 2 homolog"/>
    <property type="match status" value="1"/>
</dbReference>
<dbReference type="Gene3D" id="3.40.30.10">
    <property type="entry name" value="Glutaredoxin"/>
    <property type="match status" value="1"/>
</dbReference>
<dbReference type="InterPro" id="IPR051099">
    <property type="entry name" value="AGR/TXD"/>
</dbReference>
<dbReference type="InterPro" id="IPR036249">
    <property type="entry name" value="Thioredoxin-like_sf"/>
</dbReference>
<dbReference type="PANTHER" id="PTHR15337:SF1">
    <property type="entry name" value="ANTERIOR GRADIENT PROTEIN 2 HOMOLOG"/>
    <property type="match status" value="1"/>
</dbReference>
<dbReference type="PANTHER" id="PTHR15337">
    <property type="entry name" value="ANTERIOR GRADIENT PROTEIN-RELATED"/>
    <property type="match status" value="1"/>
</dbReference>
<dbReference type="Pfam" id="PF13899">
    <property type="entry name" value="Thioredoxin_7"/>
    <property type="match status" value="1"/>
</dbReference>
<dbReference type="SUPFAM" id="SSF52833">
    <property type="entry name" value="Thioredoxin-like"/>
    <property type="match status" value="1"/>
</dbReference>
<comment type="function">
    <text evidence="1 2 5">Required for MUC2 post-transcriptional synthesis and secretion. May play a role in the production of mucus by intestinal cells. Proto-oncogene that may play a role in cell migration, cell differentiation and cell growth (By similarity). Promotes cell adhesion (By similarity).</text>
</comment>
<comment type="subunit">
    <text evidence="2">Monomer and homodimer. Interacts with LYPD3 and DAG1 (alphaDAG1). Interacts with MUC2; disulfide-linked.</text>
</comment>
<comment type="subcellular location">
    <subcellularLocation>
        <location evidence="2">Secreted</location>
    </subcellularLocation>
    <subcellularLocation>
        <location evidence="5">Endoplasmic reticulum</location>
    </subcellularLocation>
</comment>
<comment type="tissue specificity">
    <text evidence="4 6">Expressed in lung, skeletal muscle, testis, liver, stomach, colon, small intestine, the goblet cells of the intestine and the mucuous neck cells of the stomach.</text>
</comment>
<comment type="developmental stage">
    <text>Expressed in embryo at 15 dpc onwards.</text>
</comment>
<comment type="disruption phenotype">
    <text evidence="5">Mice are viable but display altered production of mucus with loss of production of MUC2 despite expression of its mRNA. They also display an increase in mast cells in the intestine, an increased expression of inflammation-specific genes, and frequent rectal prolapse. This is associated with a higher susceptibility to colitis.</text>
</comment>
<comment type="similarity">
    <text evidence="7">Belongs to the AGR family.</text>
</comment>